<accession>Q5UR44</accession>
<sequence length="353" mass="40079">MSGNSFERSDESNEQSSISIIEYVWIGGNGELRSKTRVLYSSIMTGYKLSDIPVWNYDGSSTNQANGSSSEVFLYPRNIYRCPFRRNVNGVIVICDTYDVNGVPLETNHRHNANIIFEKYQNEKPWYGLEQEYFIFRKDTNQPIGMEYASKQGQYYCSVGSQNAYGRRISDEHMEACLYAGIKISGTNLEVAPGQHEFQIGPVEGIDAADQLWIARFILEKISEHYDRYIVYHPKPLQGDWNGSGCHTNFSTESMRSEGGLTVIMEAVDKLRTKHSEHMKVYGIDNDLRLTGDHETASIDEFSHGIGSRQCSVRIPNDTVKNGYGYFEDRRPAANIDPYQVTSIILQTVCESD</sequence>
<name>GLNA_MIMIV</name>
<evidence type="ECO:0000255" key="1">
    <source>
        <dbReference type="PROSITE-ProRule" id="PRU01330"/>
    </source>
</evidence>
<evidence type="ECO:0000255" key="2">
    <source>
        <dbReference type="PROSITE-ProRule" id="PRU01331"/>
    </source>
</evidence>
<evidence type="ECO:0000305" key="3"/>
<gene>
    <name type="ordered locus">MIMI_R565</name>
</gene>
<dbReference type="EC" id="6.3.1.2"/>
<dbReference type="EMBL" id="AY653733">
    <property type="protein sequence ID" value="AAV50828.1"/>
    <property type="molecule type" value="Genomic_DNA"/>
</dbReference>
<dbReference type="SMR" id="Q5UR44"/>
<dbReference type="KEGG" id="vg:9925201"/>
<dbReference type="OrthoDB" id="6499at10239"/>
<dbReference type="Proteomes" id="UP000001134">
    <property type="component" value="Genome"/>
</dbReference>
<dbReference type="GO" id="GO:0005524">
    <property type="term" value="F:ATP binding"/>
    <property type="evidence" value="ECO:0007669"/>
    <property type="project" value="UniProtKB-KW"/>
</dbReference>
<dbReference type="GO" id="GO:0004356">
    <property type="term" value="F:glutamine synthetase activity"/>
    <property type="evidence" value="ECO:0007669"/>
    <property type="project" value="UniProtKB-EC"/>
</dbReference>
<dbReference type="GO" id="GO:0006542">
    <property type="term" value="P:glutamine biosynthetic process"/>
    <property type="evidence" value="ECO:0007669"/>
    <property type="project" value="InterPro"/>
</dbReference>
<dbReference type="FunFam" id="3.30.590.10:FF:000004">
    <property type="entry name" value="Glutamine synthetase"/>
    <property type="match status" value="1"/>
</dbReference>
<dbReference type="Gene3D" id="3.10.20.70">
    <property type="entry name" value="Glutamine synthetase, N-terminal domain"/>
    <property type="match status" value="1"/>
</dbReference>
<dbReference type="Gene3D" id="3.30.590.10">
    <property type="entry name" value="Glutamine synthetase/guanido kinase, catalytic domain"/>
    <property type="match status" value="1"/>
</dbReference>
<dbReference type="InterPro" id="IPR008147">
    <property type="entry name" value="Gln_synt_N"/>
</dbReference>
<dbReference type="InterPro" id="IPR036651">
    <property type="entry name" value="Gln_synt_N_sf"/>
</dbReference>
<dbReference type="InterPro" id="IPR014746">
    <property type="entry name" value="Gln_synth/guanido_kin_cat_dom"/>
</dbReference>
<dbReference type="InterPro" id="IPR008146">
    <property type="entry name" value="Gln_synth_cat_dom"/>
</dbReference>
<dbReference type="InterPro" id="IPR027303">
    <property type="entry name" value="Gln_synth_gly_rich_site"/>
</dbReference>
<dbReference type="InterPro" id="IPR027302">
    <property type="entry name" value="Gln_synth_N_conserv_site"/>
</dbReference>
<dbReference type="InterPro" id="IPR050292">
    <property type="entry name" value="Glutamine_Synthetase"/>
</dbReference>
<dbReference type="PANTHER" id="PTHR20852">
    <property type="entry name" value="GLUTAMINE SYNTHETASE"/>
    <property type="match status" value="1"/>
</dbReference>
<dbReference type="PANTHER" id="PTHR20852:SF57">
    <property type="entry name" value="GLUTAMINE SYNTHETASE 2 CYTOPLASMIC"/>
    <property type="match status" value="1"/>
</dbReference>
<dbReference type="Pfam" id="PF00120">
    <property type="entry name" value="Gln-synt_C"/>
    <property type="match status" value="1"/>
</dbReference>
<dbReference type="SMART" id="SM01230">
    <property type="entry name" value="Gln-synt_C"/>
    <property type="match status" value="1"/>
</dbReference>
<dbReference type="SUPFAM" id="SSF54368">
    <property type="entry name" value="Glutamine synthetase, N-terminal domain"/>
    <property type="match status" value="1"/>
</dbReference>
<dbReference type="SUPFAM" id="SSF55931">
    <property type="entry name" value="Glutamine synthetase/guanido kinase"/>
    <property type="match status" value="1"/>
</dbReference>
<dbReference type="PROSITE" id="PS00180">
    <property type="entry name" value="GLNA_1"/>
    <property type="match status" value="1"/>
</dbReference>
<dbReference type="PROSITE" id="PS00181">
    <property type="entry name" value="GLNA_ATP"/>
    <property type="match status" value="1"/>
</dbReference>
<dbReference type="PROSITE" id="PS51986">
    <property type="entry name" value="GS_BETA_GRASP"/>
    <property type="match status" value="1"/>
</dbReference>
<dbReference type="PROSITE" id="PS51987">
    <property type="entry name" value="GS_CATALYTIC"/>
    <property type="match status" value="1"/>
</dbReference>
<feature type="chain" id="PRO_0000253437" description="Putative glutamine synthetase">
    <location>
        <begin position="1"/>
        <end position="353"/>
    </location>
</feature>
<feature type="domain" description="GS beta-grasp" evidence="1">
    <location>
        <begin position="19"/>
        <end position="102"/>
    </location>
</feature>
<feature type="domain" description="GS catalytic" evidence="2">
    <location>
        <begin position="109"/>
        <end position="353"/>
    </location>
</feature>
<keyword id="KW-0067">ATP-binding</keyword>
<keyword id="KW-0436">Ligase</keyword>
<keyword id="KW-0547">Nucleotide-binding</keyword>
<keyword id="KW-1185">Reference proteome</keyword>
<proteinExistence type="inferred from homology"/>
<reference key="1">
    <citation type="journal article" date="2004" name="Science">
        <title>The 1.2-megabase genome sequence of Mimivirus.</title>
        <authorList>
            <person name="Raoult D."/>
            <person name="Audic S."/>
            <person name="Robert C."/>
            <person name="Abergel C."/>
            <person name="Renesto P."/>
            <person name="Ogata H."/>
            <person name="La Scola B."/>
            <person name="Susan M."/>
            <person name="Claverie J.-M."/>
        </authorList>
    </citation>
    <scope>NUCLEOTIDE SEQUENCE [LARGE SCALE GENOMIC DNA]</scope>
    <source>
        <strain>Rowbotham-Bradford</strain>
    </source>
</reference>
<organismHost>
    <name type="scientific">Acanthamoeba polyphaga</name>
    <name type="common">Amoeba</name>
    <dbReference type="NCBI Taxonomy" id="5757"/>
</organismHost>
<comment type="catalytic activity">
    <reaction>
        <text>L-glutamate + NH4(+) + ATP = L-glutamine + ADP + phosphate + H(+)</text>
        <dbReference type="Rhea" id="RHEA:16169"/>
        <dbReference type="ChEBI" id="CHEBI:15378"/>
        <dbReference type="ChEBI" id="CHEBI:28938"/>
        <dbReference type="ChEBI" id="CHEBI:29985"/>
        <dbReference type="ChEBI" id="CHEBI:30616"/>
        <dbReference type="ChEBI" id="CHEBI:43474"/>
        <dbReference type="ChEBI" id="CHEBI:58359"/>
        <dbReference type="ChEBI" id="CHEBI:456216"/>
        <dbReference type="EC" id="6.3.1.2"/>
    </reaction>
</comment>
<comment type="similarity">
    <text evidence="3">Belongs to the glutamine synthetase family.</text>
</comment>
<organism>
    <name type="scientific">Acanthamoeba polyphaga mimivirus</name>
    <name type="common">APMV</name>
    <dbReference type="NCBI Taxonomy" id="212035"/>
    <lineage>
        <taxon>Viruses</taxon>
        <taxon>Varidnaviria</taxon>
        <taxon>Bamfordvirae</taxon>
        <taxon>Nucleocytoviricota</taxon>
        <taxon>Megaviricetes</taxon>
        <taxon>Imitervirales</taxon>
        <taxon>Mimiviridae</taxon>
        <taxon>Megamimivirinae</taxon>
        <taxon>Mimivirus</taxon>
        <taxon>Mimivirus bradfordmassiliense</taxon>
    </lineage>
</organism>
<protein>
    <recommendedName>
        <fullName>Putative glutamine synthetase</fullName>
        <ecNumber>6.3.1.2</ecNumber>
    </recommendedName>
</protein>